<feature type="chain" id="PRO_0000323253" description="Protein P">
    <location>
        <begin position="1"/>
        <end position="845"/>
    </location>
</feature>
<feature type="domain" description="Reverse transcriptase" evidence="1">
    <location>
        <begin position="359"/>
        <end position="602"/>
    </location>
</feature>
<feature type="region of interest" description="Terminal protein domain (TP)" evidence="1">
    <location>
        <begin position="1"/>
        <end position="179"/>
    </location>
</feature>
<feature type="region of interest" description="Spacer" evidence="1">
    <location>
        <begin position="180"/>
        <end position="348"/>
    </location>
</feature>
<feature type="region of interest" description="Disordered" evidence="2">
    <location>
        <begin position="188"/>
        <end position="211"/>
    </location>
</feature>
<feature type="region of interest" description="Disordered" evidence="2">
    <location>
        <begin position="288"/>
        <end position="317"/>
    </location>
</feature>
<feature type="region of interest" description="Polymerase/reverse transcriptase domain (RT)" evidence="1">
    <location>
        <begin position="349"/>
        <end position="692"/>
    </location>
</feature>
<feature type="compositionally biased region" description="Polar residues" evidence="2">
    <location>
        <begin position="199"/>
        <end position="211"/>
    </location>
</feature>
<feature type="compositionally biased region" description="Polar residues" evidence="2">
    <location>
        <begin position="290"/>
        <end position="301"/>
    </location>
</feature>
<feature type="binding site" evidence="1">
    <location>
        <position position="431"/>
    </location>
    <ligand>
        <name>Mg(2+)</name>
        <dbReference type="ChEBI" id="CHEBI:18420"/>
        <note>catalytic</note>
    </ligand>
</feature>
<feature type="binding site" evidence="1">
    <location>
        <position position="553"/>
    </location>
    <ligand>
        <name>Mg(2+)</name>
        <dbReference type="ChEBI" id="CHEBI:18420"/>
        <note>catalytic</note>
    </ligand>
</feature>
<feature type="binding site" evidence="1">
    <location>
        <position position="554"/>
    </location>
    <ligand>
        <name>Mg(2+)</name>
        <dbReference type="ChEBI" id="CHEBI:18420"/>
        <note>catalytic</note>
    </ligand>
</feature>
<feature type="site" description="Priming of reverse-transcription by covalently linking the first nucleotide of the (-)DNA" evidence="1">
    <location>
        <position position="65"/>
    </location>
</feature>
<organismHost>
    <name type="scientific">Homo sapiens</name>
    <name type="common">Human</name>
    <dbReference type="NCBI Taxonomy" id="9606"/>
</organismHost>
<organismHost>
    <name type="scientific">Pan troglodytes</name>
    <name type="common">Chimpanzee</name>
    <dbReference type="NCBI Taxonomy" id="9598"/>
</organismHost>
<proteinExistence type="inferred from homology"/>
<gene>
    <name evidence="1" type="primary">P</name>
</gene>
<dbReference type="EC" id="2.7.7.7" evidence="1"/>
<dbReference type="EC" id="2.7.7.49" evidence="1"/>
<dbReference type="EC" id="3.1.26.4" evidence="1"/>
<dbReference type="EMBL" id="AB194950">
    <property type="protein sequence ID" value="BAE00089.1"/>
    <property type="molecule type" value="Genomic_DNA"/>
</dbReference>
<dbReference type="Proteomes" id="UP000007911">
    <property type="component" value="Genome"/>
</dbReference>
<dbReference type="GO" id="GO:0003677">
    <property type="term" value="F:DNA binding"/>
    <property type="evidence" value="ECO:0007669"/>
    <property type="project" value="UniProtKB-UniRule"/>
</dbReference>
<dbReference type="GO" id="GO:0003887">
    <property type="term" value="F:DNA-directed DNA polymerase activity"/>
    <property type="evidence" value="ECO:0007669"/>
    <property type="project" value="UniProtKB-UniRule"/>
</dbReference>
<dbReference type="GO" id="GO:0046872">
    <property type="term" value="F:metal ion binding"/>
    <property type="evidence" value="ECO:0007669"/>
    <property type="project" value="UniProtKB-UniRule"/>
</dbReference>
<dbReference type="GO" id="GO:0003964">
    <property type="term" value="F:RNA-directed DNA polymerase activity"/>
    <property type="evidence" value="ECO:0007669"/>
    <property type="project" value="UniProtKB-UniRule"/>
</dbReference>
<dbReference type="GO" id="GO:0004523">
    <property type="term" value="F:RNA-DNA hybrid ribonuclease activity"/>
    <property type="evidence" value="ECO:0007669"/>
    <property type="project" value="UniProtKB-UniRule"/>
</dbReference>
<dbReference type="GO" id="GO:0006260">
    <property type="term" value="P:DNA replication"/>
    <property type="evidence" value="ECO:0007669"/>
    <property type="project" value="UniProtKB-UniRule"/>
</dbReference>
<dbReference type="GO" id="GO:0052170">
    <property type="term" value="P:symbiont-mediated suppression of host innate immune response"/>
    <property type="evidence" value="ECO:0007669"/>
    <property type="project" value="UniProtKB-UniRule"/>
</dbReference>
<dbReference type="FunFam" id="3.30.70.270:FF:000009">
    <property type="entry name" value="Protein P"/>
    <property type="match status" value="1"/>
</dbReference>
<dbReference type="Gene3D" id="3.30.70.270">
    <property type="match status" value="1"/>
</dbReference>
<dbReference type="HAMAP" id="MF_04073">
    <property type="entry name" value="HBV_DPOL"/>
    <property type="match status" value="1"/>
</dbReference>
<dbReference type="InterPro" id="IPR043502">
    <property type="entry name" value="DNA/RNA_pol_sf"/>
</dbReference>
<dbReference type="InterPro" id="IPR001462">
    <property type="entry name" value="DNApol_viral_C"/>
</dbReference>
<dbReference type="InterPro" id="IPR000201">
    <property type="entry name" value="DNApol_viral_N"/>
</dbReference>
<dbReference type="InterPro" id="IPR037531">
    <property type="entry name" value="HBV_DPOL"/>
</dbReference>
<dbReference type="InterPro" id="IPR043128">
    <property type="entry name" value="Rev_trsase/Diguanyl_cyclase"/>
</dbReference>
<dbReference type="InterPro" id="IPR000477">
    <property type="entry name" value="RT_dom"/>
</dbReference>
<dbReference type="InterPro" id="IPR051320">
    <property type="entry name" value="Viral_Replic_Matur_Polypro"/>
</dbReference>
<dbReference type="PANTHER" id="PTHR33064:SF29">
    <property type="entry name" value="PEPTIDASE A2 DOMAIN-CONTAINING PROTEIN-RELATED"/>
    <property type="match status" value="1"/>
</dbReference>
<dbReference type="PANTHER" id="PTHR33064">
    <property type="entry name" value="POL PROTEIN"/>
    <property type="match status" value="1"/>
</dbReference>
<dbReference type="Pfam" id="PF00336">
    <property type="entry name" value="DNA_pol_viral_C"/>
    <property type="match status" value="1"/>
</dbReference>
<dbReference type="Pfam" id="PF00242">
    <property type="entry name" value="DNA_pol_viral_N"/>
    <property type="match status" value="1"/>
</dbReference>
<dbReference type="Pfam" id="PF00078">
    <property type="entry name" value="RVT_1"/>
    <property type="match status" value="1"/>
</dbReference>
<dbReference type="SUPFAM" id="SSF56672">
    <property type="entry name" value="DNA/RNA polymerases"/>
    <property type="match status" value="1"/>
</dbReference>
<dbReference type="PROSITE" id="PS50878">
    <property type="entry name" value="RT_POL"/>
    <property type="match status" value="1"/>
</dbReference>
<sequence length="845" mass="94863">MPLSYQHFLKLLLLDDGTEAGPLEEELPRLADADLNRRVAEDLNLGNLNVSIPWTHKVGNFTGLYSHTVPIFNPEWQTPSFPKIHLQEDIIDRCQQFVGPLTVNEKRRLKLIMPARFYPNSTKYLPLDKGIKPYYPEHVVNHYFQARHYLHTLWKAGILYKRETTRSASFCGSPYSWEQELHHGRLVTKTSQRHGDKSVCSQPSGILSRSSVGPCIRSQFKQSRLGLQPHQGPLATSQSGRSGSIWARVHPSTRRCSGVEPSGSRHIDYSASSTSSCLRQSAVRKAAYSHLSTSKRQSSSGHKVEFPSFPPSSARSQSQGPVFSCWWLQFRNSKPCSEYCLSHLVNLLEDWGPCTDHGEHHIRIPRTPARVTGGVFLVDKNPHNTAESRLVVDFSQFSRGITRVSWPKFAVPNLQSLTNLLSSNLSWLSLDVSAAFYHIPLHPAAMPHLLIGSSGLSRYVARLSSNSRIHNHQYGTLQNLHDSCSRQLYVSLMLLYKTYGRKLHLYSHPIILGFRKIPMGVGLSPFLLAQFTSAICSVVRRAFPHCLAFSYMDDVVLGAKTVQHLESLYTAVTNFLLSLGIHLNPTKTKRWGYSLNFMGYIIGCWGALPQDHIVQKIKDCFRKLPVNRPIDWKVCQRIVGLLGFAAPFTQCGYPALMPLYACIQAKQAFTFSPTYKAFLSKQYMNLYPVARQRPGLCQVFADATPTGWGLAMGHQRMRGTFVAPLPIHTAELLAACFARSRSGAKLIGTDNSVVLSRKYTSFPWLLGCTANWILRGTSFVYVPSALNPADDPSRGRLGLYRPLLRLPFRPTTGRTSLYAVSPSVPSHLPDRVHFASPLHVAWRPP</sequence>
<organism>
    <name type="scientific">Hepatitis B virus genotype A3 (isolate Cameroon/CMR983/1994)</name>
    <name type="common">HBV-A</name>
    <dbReference type="NCBI Taxonomy" id="489458"/>
    <lineage>
        <taxon>Viruses</taxon>
        <taxon>Riboviria</taxon>
        <taxon>Pararnavirae</taxon>
        <taxon>Artverviricota</taxon>
        <taxon>Revtraviricetes</taxon>
        <taxon>Blubervirales</taxon>
        <taxon>Hepadnaviridae</taxon>
        <taxon>Orthohepadnavirus</taxon>
        <taxon>Hepatitis B virus</taxon>
    </lineage>
</organism>
<protein>
    <recommendedName>
        <fullName evidence="1">Protein P</fullName>
    </recommendedName>
    <domain>
        <recommendedName>
            <fullName evidence="1">DNA-directed DNA polymerase</fullName>
            <ecNumber evidence="1">2.7.7.7</ecNumber>
        </recommendedName>
    </domain>
    <domain>
        <recommendedName>
            <fullName evidence="1">RNA-directed DNA polymerase</fullName>
            <ecNumber evidence="1">2.7.7.49</ecNumber>
        </recommendedName>
    </domain>
    <domain>
        <recommendedName>
            <fullName evidence="1">Ribonuclease H</fullName>
            <ecNumber evidence="1">3.1.26.4</ecNumber>
        </recommendedName>
    </domain>
</protein>
<keyword id="KW-0235">DNA replication</keyword>
<keyword id="KW-0238">DNA-binding</keyword>
<keyword id="KW-0239">DNA-directed DNA polymerase</keyword>
<keyword id="KW-0255">Endonuclease</keyword>
<keyword id="KW-0945">Host-virus interaction</keyword>
<keyword id="KW-0378">Hydrolase</keyword>
<keyword id="KW-1090">Inhibition of host innate immune response by virus</keyword>
<keyword id="KW-1113">Inhibition of host RLR pathway by virus</keyword>
<keyword id="KW-0460">Magnesium</keyword>
<keyword id="KW-0479">Metal-binding</keyword>
<keyword id="KW-0511">Multifunctional enzyme</keyword>
<keyword id="KW-0540">Nuclease</keyword>
<keyword id="KW-0548">Nucleotidyltransferase</keyword>
<keyword id="KW-0695">RNA-directed DNA polymerase</keyword>
<keyword id="KW-0808">Transferase</keyword>
<keyword id="KW-0899">Viral immunoevasion</keyword>
<comment type="function">
    <text evidence="1">Multifunctional enzyme that converts the viral RNA genome into dsDNA in viral cytoplasmic capsids. This enzyme displays a DNA polymerase activity that can copy either DNA or RNA templates, and a ribonuclease H (RNase H) activity that cleaves the RNA strand of RNA-DNA heteroduplexes in a partially processive 3'- to 5'-endonucleasic mode. Neo-synthesized pregenomic RNA (pgRNA) are encapsidated together with the P protein, and reverse-transcribed inside the nucleocapsid. Initiation of reverse-transcription occurs first by binding the epsilon loop on the pgRNA genome, and is initiated by protein priming, thereby the 5'-end of (-)DNA is covalently linked to P protein. Partial (+)DNA is synthesized from the (-)DNA template and generates the relaxed circular DNA (RC-DNA) genome. After budding and infection, the RC-DNA migrates in the nucleus, and is converted into a plasmid-like covalently closed circular DNA (cccDNA). The activity of P protein does not seem to be necessary for cccDNA generation, and is presumably released from (+)DNA by host nuclear DNA repair machinery.</text>
</comment>
<comment type="catalytic activity">
    <reaction evidence="1">
        <text>DNA(n) + a 2'-deoxyribonucleoside 5'-triphosphate = DNA(n+1) + diphosphate</text>
        <dbReference type="Rhea" id="RHEA:22508"/>
        <dbReference type="Rhea" id="RHEA-COMP:17339"/>
        <dbReference type="Rhea" id="RHEA-COMP:17340"/>
        <dbReference type="ChEBI" id="CHEBI:33019"/>
        <dbReference type="ChEBI" id="CHEBI:61560"/>
        <dbReference type="ChEBI" id="CHEBI:173112"/>
        <dbReference type="EC" id="2.7.7.7"/>
    </reaction>
</comment>
<comment type="catalytic activity">
    <reaction evidence="1">
        <text>DNA(n) + a 2'-deoxyribonucleoside 5'-triphosphate = DNA(n+1) + diphosphate</text>
        <dbReference type="Rhea" id="RHEA:22508"/>
        <dbReference type="Rhea" id="RHEA-COMP:17339"/>
        <dbReference type="Rhea" id="RHEA-COMP:17340"/>
        <dbReference type="ChEBI" id="CHEBI:33019"/>
        <dbReference type="ChEBI" id="CHEBI:61560"/>
        <dbReference type="ChEBI" id="CHEBI:173112"/>
        <dbReference type="EC" id="2.7.7.49"/>
    </reaction>
</comment>
<comment type="catalytic activity">
    <reaction evidence="1">
        <text>Endonucleolytic cleavage to 5'-phosphomonoester.</text>
        <dbReference type="EC" id="3.1.26.4"/>
    </reaction>
</comment>
<comment type="activity regulation">
    <text evidence="1">Activated by host HSP70 and HSP40 in vitro to be able to bind the epsilon loop of the pgRNA. Because deletion of the RNase H region renders the protein partly chaperone-independent, the chaperones may be needed indirectly to relieve occlusion of the RNA-binding site by this domain. Inhibited by several reverse-transcriptase inhibitors: Lamivudine, Adefovir and Entecavir.</text>
</comment>
<comment type="domain">
    <text evidence="1">Terminal protein domain (TP) is hepadnavirus-specific. Spacer domain is highly variable and separates the TP and RT domains. Polymerase/reverse-transcriptase domain (RT) and ribonuclease H domain (RH) are similar to retrovirus reverse transcriptase/RNase H.</text>
</comment>
<comment type="domain">
    <text evidence="1">The polymerase/reverse transcriptase (RT) and ribonuclease H (RH) domains are structured in five subdomains: finger, palm, thumb, connection and RNase H. Within the palm subdomain, the 'primer grip' region is thought to be involved in the positioning of the primer terminus for accommodating the incoming nucleotide. The RH domain stabilizes the association of RT with primer-template.</text>
</comment>
<comment type="miscellaneous">
    <text evidence="1">Hepadnaviral virions contain probably just one P protein molecule per particle.</text>
</comment>
<comment type="similarity">
    <text evidence="1">Belongs to the hepadnaviridae P protein family.</text>
</comment>
<accession>Q4R1S7</accession>
<reference key="1">
    <citation type="journal article" date="2005" name="J. Gen. Virol.">
        <title>A new subtype (subgenotype) Ac (A3) of hepatitis B virus and recombination between genotypes A and E in Cameroon.</title>
        <authorList>
            <person name="Kurbanov F."/>
            <person name="Tanaka Y."/>
            <person name="Fujiwara K."/>
            <person name="Sugauchi F."/>
            <person name="Mbanya D."/>
            <person name="Zekeng L."/>
            <person name="Ndembi N."/>
            <person name="Ngansop C."/>
            <person name="Kaptue L."/>
            <person name="Miura T."/>
            <person name="Ido E."/>
            <person name="Hayami M."/>
            <person name="Ichimura H."/>
            <person name="Mizokami M."/>
        </authorList>
    </citation>
    <scope>NUCLEOTIDE SEQUENCE [GENOMIC DNA]</scope>
</reference>
<reference key="2">
    <citation type="journal article" date="2007" name="World J. Gastroenterol.">
        <title>Hepatitis B virus replication.</title>
        <authorList>
            <person name="Beck J."/>
            <person name="Nassal M."/>
        </authorList>
    </citation>
    <scope>REVIEW</scope>
</reference>
<evidence type="ECO:0000255" key="1">
    <source>
        <dbReference type="HAMAP-Rule" id="MF_04073"/>
    </source>
</evidence>
<evidence type="ECO:0000256" key="2">
    <source>
        <dbReference type="SAM" id="MobiDB-lite"/>
    </source>
</evidence>
<name>DPOL_HBVA8</name>